<evidence type="ECO:0000255" key="1">
    <source>
        <dbReference type="HAMAP-Rule" id="MF_00315"/>
    </source>
</evidence>
<reference key="1">
    <citation type="submission" date="2008-04" db="EMBL/GenBank/DDBJ databases">
        <title>Complete sequence of Yersinia pseudotuberculosis PB1/+.</title>
        <authorList>
            <person name="Copeland A."/>
            <person name="Lucas S."/>
            <person name="Lapidus A."/>
            <person name="Glavina del Rio T."/>
            <person name="Dalin E."/>
            <person name="Tice H."/>
            <person name="Bruce D."/>
            <person name="Goodwin L."/>
            <person name="Pitluck S."/>
            <person name="Munk A.C."/>
            <person name="Brettin T."/>
            <person name="Detter J.C."/>
            <person name="Han C."/>
            <person name="Tapia R."/>
            <person name="Schmutz J."/>
            <person name="Larimer F."/>
            <person name="Land M."/>
            <person name="Hauser L."/>
            <person name="Challacombe J.F."/>
            <person name="Green L."/>
            <person name="Lindler L.E."/>
            <person name="Nikolich M.P."/>
            <person name="Richardson P."/>
        </authorList>
    </citation>
    <scope>NUCLEOTIDE SEQUENCE [LARGE SCALE GENOMIC DNA]</scope>
    <source>
        <strain>PB1/+</strain>
    </source>
</reference>
<feature type="chain" id="PRO_1000115784" description="1-deoxy-D-xylulose-5-phosphate synthase">
    <location>
        <begin position="1"/>
        <end position="619"/>
    </location>
</feature>
<feature type="binding site" evidence="1">
    <location>
        <position position="80"/>
    </location>
    <ligand>
        <name>thiamine diphosphate</name>
        <dbReference type="ChEBI" id="CHEBI:58937"/>
    </ligand>
</feature>
<feature type="binding site" evidence="1">
    <location>
        <begin position="121"/>
        <end position="123"/>
    </location>
    <ligand>
        <name>thiamine diphosphate</name>
        <dbReference type="ChEBI" id="CHEBI:58937"/>
    </ligand>
</feature>
<feature type="binding site" evidence="1">
    <location>
        <position position="152"/>
    </location>
    <ligand>
        <name>Mg(2+)</name>
        <dbReference type="ChEBI" id="CHEBI:18420"/>
    </ligand>
</feature>
<feature type="binding site" evidence="1">
    <location>
        <begin position="153"/>
        <end position="154"/>
    </location>
    <ligand>
        <name>thiamine diphosphate</name>
        <dbReference type="ChEBI" id="CHEBI:58937"/>
    </ligand>
</feature>
<feature type="binding site" evidence="1">
    <location>
        <position position="181"/>
    </location>
    <ligand>
        <name>Mg(2+)</name>
        <dbReference type="ChEBI" id="CHEBI:18420"/>
    </ligand>
</feature>
<feature type="binding site" evidence="1">
    <location>
        <position position="181"/>
    </location>
    <ligand>
        <name>thiamine diphosphate</name>
        <dbReference type="ChEBI" id="CHEBI:58937"/>
    </ligand>
</feature>
<feature type="binding site" evidence="1">
    <location>
        <position position="288"/>
    </location>
    <ligand>
        <name>thiamine diphosphate</name>
        <dbReference type="ChEBI" id="CHEBI:58937"/>
    </ligand>
</feature>
<feature type="binding site" evidence="1">
    <location>
        <position position="370"/>
    </location>
    <ligand>
        <name>thiamine diphosphate</name>
        <dbReference type="ChEBI" id="CHEBI:58937"/>
    </ligand>
</feature>
<organism>
    <name type="scientific">Yersinia pseudotuberculosis serotype IB (strain PB1/+)</name>
    <dbReference type="NCBI Taxonomy" id="502801"/>
    <lineage>
        <taxon>Bacteria</taxon>
        <taxon>Pseudomonadati</taxon>
        <taxon>Pseudomonadota</taxon>
        <taxon>Gammaproteobacteria</taxon>
        <taxon>Enterobacterales</taxon>
        <taxon>Yersiniaceae</taxon>
        <taxon>Yersinia</taxon>
    </lineage>
</organism>
<name>DXS_YERPB</name>
<gene>
    <name evidence="1" type="primary">dxs</name>
    <name type="ordered locus">YPTS_0980</name>
</gene>
<comment type="function">
    <text evidence="1">Catalyzes the acyloin condensation reaction between C atoms 2 and 3 of pyruvate and glyceraldehyde 3-phosphate to yield 1-deoxy-D-xylulose-5-phosphate (DXP).</text>
</comment>
<comment type="catalytic activity">
    <reaction evidence="1">
        <text>D-glyceraldehyde 3-phosphate + pyruvate + H(+) = 1-deoxy-D-xylulose 5-phosphate + CO2</text>
        <dbReference type="Rhea" id="RHEA:12605"/>
        <dbReference type="ChEBI" id="CHEBI:15361"/>
        <dbReference type="ChEBI" id="CHEBI:15378"/>
        <dbReference type="ChEBI" id="CHEBI:16526"/>
        <dbReference type="ChEBI" id="CHEBI:57792"/>
        <dbReference type="ChEBI" id="CHEBI:59776"/>
        <dbReference type="EC" id="2.2.1.7"/>
    </reaction>
</comment>
<comment type="cofactor">
    <cofactor evidence="1">
        <name>Mg(2+)</name>
        <dbReference type="ChEBI" id="CHEBI:18420"/>
    </cofactor>
    <text evidence="1">Binds 1 Mg(2+) ion per subunit.</text>
</comment>
<comment type="cofactor">
    <cofactor evidence="1">
        <name>thiamine diphosphate</name>
        <dbReference type="ChEBI" id="CHEBI:58937"/>
    </cofactor>
    <text evidence="1">Binds 1 thiamine pyrophosphate per subunit.</text>
</comment>
<comment type="pathway">
    <text evidence="1">Metabolic intermediate biosynthesis; 1-deoxy-D-xylulose 5-phosphate biosynthesis; 1-deoxy-D-xylulose 5-phosphate from D-glyceraldehyde 3-phosphate and pyruvate: step 1/1.</text>
</comment>
<comment type="subunit">
    <text evidence="1">Homodimer.</text>
</comment>
<comment type="similarity">
    <text evidence="1">Belongs to the transketolase family. DXPS subfamily.</text>
</comment>
<dbReference type="EC" id="2.2.1.7" evidence="1"/>
<dbReference type="EMBL" id="CP001048">
    <property type="protein sequence ID" value="ACC87961.1"/>
    <property type="molecule type" value="Genomic_DNA"/>
</dbReference>
<dbReference type="RefSeq" id="WP_011191862.1">
    <property type="nucleotide sequence ID" value="NZ_CP009780.1"/>
</dbReference>
<dbReference type="SMR" id="B2K6T7"/>
<dbReference type="GeneID" id="49787005"/>
<dbReference type="KEGG" id="ypb:YPTS_0980"/>
<dbReference type="PATRIC" id="fig|502801.10.peg.321"/>
<dbReference type="UniPathway" id="UPA00064">
    <property type="reaction ID" value="UER00091"/>
</dbReference>
<dbReference type="GO" id="GO:0005829">
    <property type="term" value="C:cytosol"/>
    <property type="evidence" value="ECO:0007669"/>
    <property type="project" value="TreeGrafter"/>
</dbReference>
<dbReference type="GO" id="GO:0008661">
    <property type="term" value="F:1-deoxy-D-xylulose-5-phosphate synthase activity"/>
    <property type="evidence" value="ECO:0007669"/>
    <property type="project" value="UniProtKB-UniRule"/>
</dbReference>
<dbReference type="GO" id="GO:0000287">
    <property type="term" value="F:magnesium ion binding"/>
    <property type="evidence" value="ECO:0007669"/>
    <property type="project" value="UniProtKB-UniRule"/>
</dbReference>
<dbReference type="GO" id="GO:0030976">
    <property type="term" value="F:thiamine pyrophosphate binding"/>
    <property type="evidence" value="ECO:0007669"/>
    <property type="project" value="UniProtKB-UniRule"/>
</dbReference>
<dbReference type="GO" id="GO:0052865">
    <property type="term" value="P:1-deoxy-D-xylulose 5-phosphate biosynthetic process"/>
    <property type="evidence" value="ECO:0007669"/>
    <property type="project" value="UniProtKB-UniPathway"/>
</dbReference>
<dbReference type="GO" id="GO:0019288">
    <property type="term" value="P:isopentenyl diphosphate biosynthetic process, methylerythritol 4-phosphate pathway"/>
    <property type="evidence" value="ECO:0007669"/>
    <property type="project" value="TreeGrafter"/>
</dbReference>
<dbReference type="GO" id="GO:0016114">
    <property type="term" value="P:terpenoid biosynthetic process"/>
    <property type="evidence" value="ECO:0007669"/>
    <property type="project" value="UniProtKB-UniRule"/>
</dbReference>
<dbReference type="GO" id="GO:0009228">
    <property type="term" value="P:thiamine biosynthetic process"/>
    <property type="evidence" value="ECO:0007669"/>
    <property type="project" value="UniProtKB-UniRule"/>
</dbReference>
<dbReference type="CDD" id="cd02007">
    <property type="entry name" value="TPP_DXS"/>
    <property type="match status" value="1"/>
</dbReference>
<dbReference type="CDD" id="cd07033">
    <property type="entry name" value="TPP_PYR_DXS_TK_like"/>
    <property type="match status" value="1"/>
</dbReference>
<dbReference type="FunFam" id="3.40.50.920:FF:000002">
    <property type="entry name" value="1-deoxy-D-xylulose-5-phosphate synthase"/>
    <property type="match status" value="1"/>
</dbReference>
<dbReference type="FunFam" id="3.40.50.970:FF:000005">
    <property type="entry name" value="1-deoxy-D-xylulose-5-phosphate synthase"/>
    <property type="match status" value="1"/>
</dbReference>
<dbReference type="Gene3D" id="3.40.50.920">
    <property type="match status" value="1"/>
</dbReference>
<dbReference type="Gene3D" id="3.40.50.970">
    <property type="match status" value="2"/>
</dbReference>
<dbReference type="HAMAP" id="MF_00315">
    <property type="entry name" value="DXP_synth"/>
    <property type="match status" value="1"/>
</dbReference>
<dbReference type="InterPro" id="IPR005477">
    <property type="entry name" value="Dxylulose-5-P_synthase"/>
</dbReference>
<dbReference type="InterPro" id="IPR029061">
    <property type="entry name" value="THDP-binding"/>
</dbReference>
<dbReference type="InterPro" id="IPR009014">
    <property type="entry name" value="Transketo_C/PFOR_II"/>
</dbReference>
<dbReference type="InterPro" id="IPR005475">
    <property type="entry name" value="Transketolase-like_Pyr-bd"/>
</dbReference>
<dbReference type="InterPro" id="IPR020826">
    <property type="entry name" value="Transketolase_BS"/>
</dbReference>
<dbReference type="InterPro" id="IPR033248">
    <property type="entry name" value="Transketolase_C"/>
</dbReference>
<dbReference type="InterPro" id="IPR049557">
    <property type="entry name" value="Transketolase_CS"/>
</dbReference>
<dbReference type="NCBIfam" id="TIGR00204">
    <property type="entry name" value="dxs"/>
    <property type="match status" value="1"/>
</dbReference>
<dbReference type="NCBIfam" id="NF003933">
    <property type="entry name" value="PRK05444.2-2"/>
    <property type="match status" value="1"/>
</dbReference>
<dbReference type="PANTHER" id="PTHR43322">
    <property type="entry name" value="1-D-DEOXYXYLULOSE 5-PHOSPHATE SYNTHASE-RELATED"/>
    <property type="match status" value="1"/>
</dbReference>
<dbReference type="PANTHER" id="PTHR43322:SF5">
    <property type="entry name" value="1-DEOXY-D-XYLULOSE-5-PHOSPHATE SYNTHASE, CHLOROPLASTIC"/>
    <property type="match status" value="1"/>
</dbReference>
<dbReference type="Pfam" id="PF13292">
    <property type="entry name" value="DXP_synthase_N"/>
    <property type="match status" value="1"/>
</dbReference>
<dbReference type="Pfam" id="PF02779">
    <property type="entry name" value="Transket_pyr"/>
    <property type="match status" value="1"/>
</dbReference>
<dbReference type="Pfam" id="PF02780">
    <property type="entry name" value="Transketolase_C"/>
    <property type="match status" value="1"/>
</dbReference>
<dbReference type="SMART" id="SM00861">
    <property type="entry name" value="Transket_pyr"/>
    <property type="match status" value="1"/>
</dbReference>
<dbReference type="SUPFAM" id="SSF52518">
    <property type="entry name" value="Thiamin diphosphate-binding fold (THDP-binding)"/>
    <property type="match status" value="2"/>
</dbReference>
<dbReference type="SUPFAM" id="SSF52922">
    <property type="entry name" value="TK C-terminal domain-like"/>
    <property type="match status" value="1"/>
</dbReference>
<dbReference type="PROSITE" id="PS00801">
    <property type="entry name" value="TRANSKETOLASE_1"/>
    <property type="match status" value="1"/>
</dbReference>
<dbReference type="PROSITE" id="PS00802">
    <property type="entry name" value="TRANSKETOLASE_2"/>
    <property type="match status" value="1"/>
</dbReference>
<keyword id="KW-0414">Isoprene biosynthesis</keyword>
<keyword id="KW-0460">Magnesium</keyword>
<keyword id="KW-0479">Metal-binding</keyword>
<keyword id="KW-0784">Thiamine biosynthesis</keyword>
<keyword id="KW-0786">Thiamine pyrophosphate</keyword>
<keyword id="KW-0808">Transferase</keyword>
<proteinExistence type="inferred from homology"/>
<sequence>MSLDIAKYPTLALAENPEELRMLPKESLPKLCDELRQYLLTCVSRSSGHFASGLGVVELTVALHYVYNTPFDHLIWDVGHQAYPHKILTGRRDRISTIRQKDGLHPFPWRGESEYDVLSVGHSSTSISAGLGMAVAAEREGKGRRTVCVIGDGAITAGMAFEAMSHAGDIHSDMLVILNDNEMSISENVGGLNNHLAQLLSGKLYASLREGGKKAFSALPPIKDLLKRTEEHLKGMVVPSTLFEELGFNYIGPVDGHDVHTLTQTLKNMRDLKGPQLLHIMTKKGKGYAPAEKDPIGWHAVPKFDPASGTLPKSQSSLPTYSKIFGEWLCETAAKDSKLMAVTPAMREGSGMVRFSREYPQQYFDVAIAEQHAVTFAAGLAIGGYKPVVAIYSTFLQRAYDQLIHDVAIQNLPVLFAIDRGGLVGADGQTHQGAFDLSFMRCIPNMVIMAPSDENECRQMLYTGYHHNGPAAVRYPRGNGTGAVLEPLEMLPIGKGVLRREGEKIAILCFGTLLAQAQLAAENLNATLVDMRFVKPLDEELVLEMAAKHQVLVTVEENAIMGGAGSGVNELLMAKRRWVPVLNIGLPDLFVPQGEQDEMRSELGLDAAGIQRQIEAWLA</sequence>
<accession>B2K6T7</accession>
<protein>
    <recommendedName>
        <fullName evidence="1">1-deoxy-D-xylulose-5-phosphate synthase</fullName>
        <ecNumber evidence="1">2.2.1.7</ecNumber>
    </recommendedName>
    <alternativeName>
        <fullName evidence="1">1-deoxyxylulose-5-phosphate synthase</fullName>
        <shortName evidence="1">DXP synthase</shortName>
        <shortName evidence="1">DXPS</shortName>
    </alternativeName>
</protein>